<gene>
    <name evidence="1" type="primary">rpsJ</name>
    <name type="ordered locus">Rru_A2689</name>
</gene>
<comment type="function">
    <text evidence="1">Involved in the binding of tRNA to the ribosomes.</text>
</comment>
<comment type="subunit">
    <text evidence="1">Part of the 30S ribosomal subunit.</text>
</comment>
<comment type="similarity">
    <text evidence="1">Belongs to the universal ribosomal protein uS10 family.</text>
</comment>
<sequence>MESQNIRIRLKAFDHRVLDQSTREIVSTAKRTGAQVRGPIPLPTRIEKFTVNRSPHIDKKSREQFEIRTHKRLLDIVDPTPQTVDALMKLDLAAGVDVEIKL</sequence>
<proteinExistence type="inferred from homology"/>
<feature type="chain" id="PRO_0000237087" description="Small ribosomal subunit protein uS10">
    <location>
        <begin position="1"/>
        <end position="102"/>
    </location>
</feature>
<reference key="1">
    <citation type="journal article" date="2011" name="Stand. Genomic Sci.">
        <title>Complete genome sequence of Rhodospirillum rubrum type strain (S1).</title>
        <authorList>
            <person name="Munk A.C."/>
            <person name="Copeland A."/>
            <person name="Lucas S."/>
            <person name="Lapidus A."/>
            <person name="Del Rio T.G."/>
            <person name="Barry K."/>
            <person name="Detter J.C."/>
            <person name="Hammon N."/>
            <person name="Israni S."/>
            <person name="Pitluck S."/>
            <person name="Brettin T."/>
            <person name="Bruce D."/>
            <person name="Han C."/>
            <person name="Tapia R."/>
            <person name="Gilna P."/>
            <person name="Schmutz J."/>
            <person name="Larimer F."/>
            <person name="Land M."/>
            <person name="Kyrpides N.C."/>
            <person name="Mavromatis K."/>
            <person name="Richardson P."/>
            <person name="Rohde M."/>
            <person name="Goeker M."/>
            <person name="Klenk H.P."/>
            <person name="Zhang Y."/>
            <person name="Roberts G.P."/>
            <person name="Reslewic S."/>
            <person name="Schwartz D.C."/>
        </authorList>
    </citation>
    <scope>NUCLEOTIDE SEQUENCE [LARGE SCALE GENOMIC DNA]</scope>
    <source>
        <strain>ATCC 11170 / ATH 1.1.1 / DSM 467 / LMG 4362 / NCIMB 8255 / S1</strain>
    </source>
</reference>
<dbReference type="EMBL" id="CP000230">
    <property type="protein sequence ID" value="ABC23486.1"/>
    <property type="molecule type" value="Genomic_DNA"/>
</dbReference>
<dbReference type="RefSeq" id="WP_011390499.1">
    <property type="nucleotide sequence ID" value="NC_007643.1"/>
</dbReference>
<dbReference type="RefSeq" id="YP_427773.1">
    <property type="nucleotide sequence ID" value="NC_007643.1"/>
</dbReference>
<dbReference type="SMR" id="Q2RQV9"/>
<dbReference type="STRING" id="269796.Rru_A2689"/>
<dbReference type="EnsemblBacteria" id="ABC23486">
    <property type="protein sequence ID" value="ABC23486"/>
    <property type="gene ID" value="Rru_A2689"/>
</dbReference>
<dbReference type="KEGG" id="rru:Rru_A2689"/>
<dbReference type="PATRIC" id="fig|269796.9.peg.2796"/>
<dbReference type="eggNOG" id="COG0051">
    <property type="taxonomic scope" value="Bacteria"/>
</dbReference>
<dbReference type="HOGENOM" id="CLU_122625_1_3_5"/>
<dbReference type="PhylomeDB" id="Q2RQV9"/>
<dbReference type="Proteomes" id="UP000001929">
    <property type="component" value="Chromosome"/>
</dbReference>
<dbReference type="GO" id="GO:1990904">
    <property type="term" value="C:ribonucleoprotein complex"/>
    <property type="evidence" value="ECO:0007669"/>
    <property type="project" value="UniProtKB-KW"/>
</dbReference>
<dbReference type="GO" id="GO:0005840">
    <property type="term" value="C:ribosome"/>
    <property type="evidence" value="ECO:0007669"/>
    <property type="project" value="UniProtKB-KW"/>
</dbReference>
<dbReference type="GO" id="GO:0003735">
    <property type="term" value="F:structural constituent of ribosome"/>
    <property type="evidence" value="ECO:0007669"/>
    <property type="project" value="InterPro"/>
</dbReference>
<dbReference type="GO" id="GO:0000049">
    <property type="term" value="F:tRNA binding"/>
    <property type="evidence" value="ECO:0007669"/>
    <property type="project" value="UniProtKB-UniRule"/>
</dbReference>
<dbReference type="GO" id="GO:0006412">
    <property type="term" value="P:translation"/>
    <property type="evidence" value="ECO:0007669"/>
    <property type="project" value="UniProtKB-UniRule"/>
</dbReference>
<dbReference type="FunFam" id="3.30.70.600:FF:000001">
    <property type="entry name" value="30S ribosomal protein S10"/>
    <property type="match status" value="1"/>
</dbReference>
<dbReference type="Gene3D" id="3.30.70.600">
    <property type="entry name" value="Ribosomal protein S10 domain"/>
    <property type="match status" value="1"/>
</dbReference>
<dbReference type="HAMAP" id="MF_00508">
    <property type="entry name" value="Ribosomal_uS10"/>
    <property type="match status" value="1"/>
</dbReference>
<dbReference type="InterPro" id="IPR001848">
    <property type="entry name" value="Ribosomal_uS10"/>
</dbReference>
<dbReference type="InterPro" id="IPR018268">
    <property type="entry name" value="Ribosomal_uS10_CS"/>
</dbReference>
<dbReference type="InterPro" id="IPR027486">
    <property type="entry name" value="Ribosomal_uS10_dom"/>
</dbReference>
<dbReference type="InterPro" id="IPR036838">
    <property type="entry name" value="Ribosomal_uS10_dom_sf"/>
</dbReference>
<dbReference type="NCBIfam" id="NF001861">
    <property type="entry name" value="PRK00596.1"/>
    <property type="match status" value="1"/>
</dbReference>
<dbReference type="NCBIfam" id="TIGR01049">
    <property type="entry name" value="rpsJ_bact"/>
    <property type="match status" value="1"/>
</dbReference>
<dbReference type="PANTHER" id="PTHR11700">
    <property type="entry name" value="30S RIBOSOMAL PROTEIN S10 FAMILY MEMBER"/>
    <property type="match status" value="1"/>
</dbReference>
<dbReference type="Pfam" id="PF00338">
    <property type="entry name" value="Ribosomal_S10"/>
    <property type="match status" value="1"/>
</dbReference>
<dbReference type="PRINTS" id="PR00971">
    <property type="entry name" value="RIBOSOMALS10"/>
</dbReference>
<dbReference type="SMART" id="SM01403">
    <property type="entry name" value="Ribosomal_S10"/>
    <property type="match status" value="1"/>
</dbReference>
<dbReference type="SUPFAM" id="SSF54999">
    <property type="entry name" value="Ribosomal protein S10"/>
    <property type="match status" value="1"/>
</dbReference>
<dbReference type="PROSITE" id="PS00361">
    <property type="entry name" value="RIBOSOMAL_S10"/>
    <property type="match status" value="1"/>
</dbReference>
<name>RS10_RHORT</name>
<evidence type="ECO:0000255" key="1">
    <source>
        <dbReference type="HAMAP-Rule" id="MF_00508"/>
    </source>
</evidence>
<evidence type="ECO:0000305" key="2"/>
<accession>Q2RQV9</accession>
<protein>
    <recommendedName>
        <fullName evidence="1">Small ribosomal subunit protein uS10</fullName>
    </recommendedName>
    <alternativeName>
        <fullName evidence="2">30S ribosomal protein S10</fullName>
    </alternativeName>
</protein>
<organism>
    <name type="scientific">Rhodospirillum rubrum (strain ATCC 11170 / ATH 1.1.1 / DSM 467 / LMG 4362 / NCIMB 8255 / S1)</name>
    <dbReference type="NCBI Taxonomy" id="269796"/>
    <lineage>
        <taxon>Bacteria</taxon>
        <taxon>Pseudomonadati</taxon>
        <taxon>Pseudomonadota</taxon>
        <taxon>Alphaproteobacteria</taxon>
        <taxon>Rhodospirillales</taxon>
        <taxon>Rhodospirillaceae</taxon>
        <taxon>Rhodospirillum</taxon>
    </lineage>
</organism>
<keyword id="KW-1185">Reference proteome</keyword>
<keyword id="KW-0687">Ribonucleoprotein</keyword>
<keyword id="KW-0689">Ribosomal protein</keyword>